<sequence length="591" mass="66647">MLMMVIRIYIHKRLNAKDYNNFYTSIGDFGYTIPGSDAPQYNIESDSEHYLNFGIAHINFNNGTNNQITNPNPEVYTRFYIQMKTPDGQDRIVYEAENANAISFLIRSTYHKPMSGLVGGFRFDPLLGIRVYKDSFVLADELARIQSEFTTVYGNSGINVTENTTNYSVRMYWESAVVVEPGEPSPENPIPWLSNLPNITDGNPENIDGQWGNVTGFNYNPTTKLFNADVIYDGNSYPIRDAVVASNDDSFLTRTEKAYYFTQGGQKFLYLNFSKDIDSFMFKNHYSELKNWVGHALWNLSTGEVNVMEQLKVFQYLKFTEDNELMAYFYIVDTPVDDLISVTSNVAYRYWKPTWFGLGPKEPGPIQNKIITAAQGEFNSIRPTWVKPVYLGSYFAGASGLVIAGSALIKGGSPWFGLGLAGVGILAGGILQYADDNEWLNYDIAQVQKLEPNVNIRSEISEAYFNAYGQMFPSTLGQSLYRISYGQFDQSDLQVISDKSDVITVVFETDGITHTYQKDQIDDTWDGPATEIPLGVDGILPEWALWLITIVIGLFALSNLQKIFDTIKKKPIISIIVVIAILYALTYFNLL</sequence>
<dbReference type="EMBL" id="L13696">
    <property type="protein sequence ID" value="AAA87957.1"/>
    <property type="molecule type" value="Genomic_DNA"/>
</dbReference>
<dbReference type="RefSeq" id="NP_040809.1">
    <property type="nucleotide sequence ID" value="NC_001447.1"/>
</dbReference>
<dbReference type="GeneID" id="1261009"/>
<dbReference type="KEGG" id="vg:1261009"/>
<dbReference type="Proteomes" id="UP000001573">
    <property type="component" value="Genome"/>
</dbReference>
<dbReference type="GO" id="GO:0016020">
    <property type="term" value="C:membrane"/>
    <property type="evidence" value="ECO:0007669"/>
    <property type="project" value="UniProtKB-SubCell"/>
</dbReference>
<feature type="chain" id="PRO_0000066348" description="Uncharacterized 66.6 kDa protein">
    <location>
        <begin position="1"/>
        <end position="591"/>
    </location>
</feature>
<feature type="transmembrane region" description="Helical" evidence="1">
    <location>
        <begin position="389"/>
        <end position="409"/>
    </location>
</feature>
<feature type="transmembrane region" description="Helical" evidence="1">
    <location>
        <begin position="411"/>
        <end position="431"/>
    </location>
</feature>
<feature type="transmembrane region" description="Helical" evidence="1">
    <location>
        <begin position="538"/>
        <end position="558"/>
    </location>
</feature>
<feature type="transmembrane region" description="Helical" evidence="1">
    <location>
        <begin position="571"/>
        <end position="591"/>
    </location>
</feature>
<organismHost>
    <name type="scientific">Mycoplasma</name>
    <dbReference type="NCBI Taxonomy" id="2093"/>
</organismHost>
<name>YO01_BPL2</name>
<comment type="subcellular location">
    <subcellularLocation>
        <location evidence="2">Membrane</location>
        <topology evidence="2">Multi-pass membrane protein</topology>
    </subcellularLocation>
</comment>
<organism>
    <name type="scientific">Acholeplasma phage L2</name>
    <name type="common">Bacteriophage L2</name>
    <dbReference type="NCBI Taxonomy" id="46014"/>
    <lineage>
        <taxon>Viruses</taxon>
        <taxon>Viruses incertae sedis</taxon>
        <taxon>Plasmaviridae</taxon>
        <taxon>Plasmavirus</taxon>
    </lineage>
</organism>
<evidence type="ECO:0000255" key="1"/>
<evidence type="ECO:0000305" key="2"/>
<accession>P42536</accession>
<proteinExistence type="predicted"/>
<protein>
    <recommendedName>
        <fullName>Uncharacterized 66.6 kDa protein</fullName>
    </recommendedName>
    <alternativeName>
        <fullName>ORF1</fullName>
    </alternativeName>
</protein>
<reference key="1">
    <citation type="journal article" date="1994" name="Gene">
        <title>Sequence analysis of a unique temperature phage: mycoplasma virus L2.</title>
        <authorList>
            <person name="Maniloff J."/>
            <person name="Kampo G.J."/>
            <person name="Dascher C.C."/>
        </authorList>
    </citation>
    <scope>NUCLEOTIDE SEQUENCE [LARGE SCALE GENOMIC DNA]</scope>
</reference>
<keyword id="KW-0472">Membrane</keyword>
<keyword id="KW-1185">Reference proteome</keyword>
<keyword id="KW-0812">Transmembrane</keyword>
<keyword id="KW-1133">Transmembrane helix</keyword>